<gene>
    <name type="primary">ptrA</name>
    <name type="synonym">ptr</name>
    <name type="ordered locus">c3415</name>
</gene>
<protein>
    <recommendedName>
        <fullName>Protease 3</fullName>
        <ecNumber>3.4.24.55</ecNumber>
    </recommendedName>
    <alternativeName>
        <fullName>Pitrilysin</fullName>
    </alternativeName>
    <alternativeName>
        <fullName>Protease III</fullName>
    </alternativeName>
    <alternativeName>
        <fullName>Protease pi</fullName>
    </alternativeName>
</protein>
<sequence length="962" mass="107892">MPRSIWFKALLLFVALWAPLSQAETGWQPIQETIRKSDKDNRQYQAIRLDNGMVVLLVSDPQAVKSLSALVVPVGSLEDPEAYQGLAHYLEHMSLMGSKKYPQADSLAEYLKMHGGSHNASTAPYRTAFYLEVENDALPGAVDRLADAIAEPLLDKKYAERERNAVNAELTMARTRDGMRMAQVSAETINPAHPGSKFSGGNLETLSDKPGNPVQQALKDFHEKYYSANLMKAVIYSNKPLPELAKMAADTFGRVPNKESKKPEITVPVVTDAQKGIIIHYVPALPRKVLRVEFRIDNNSAKFRSKTDELITYLIGNRSPGTLSDWLQKQGLVEGISANSDPIVNGNSGVLAISASLTDKGLANRDQVVAAIFSYLNLLREKGIDKQYFDELANVLDIDFRYPSITRDMDYVEWLADTMIRVPVEHTLDAVNIADRYDAKAVKERLAMMTPQNARIWYISPKEPHNKTAYFVDAPYQVDKISEQTFADWQKKAANIALSLPELNPYIPDDFSLIKSEKKYDHPELIVDESNLRVVYAPSRYFASEPKADVSLILRNPKAMDSARNQVMFALNDYLAGLALDQLSNQASVGGISFSTNANNGLMVNANGYTQRLPQLFQALLEGYFSYTATEDQLEQAKSWYNQMMDSAEKGKAFEQAIMPAQMLSQVPYFSRDERRKILPSITLKEVLAYRDALKSGARPEFMVIGNMTEAQATTLARHVQKQLGADGSEWCRNKDVVVDKKQSVIFEKAGNSTDSALAAIFVPTGYDEYTSSAYSSLLGQIVQPWFYNQLRTEEQLGYAVFAFPMSVGRQWGMGFLLQSNDKQPSFLWERYKAFFPTAEAKLRTMKPEEFAQIQQAVITQMLQAPQTLGEEASKLSKDFDRGNMRFDSRDKIVAQIKLLTPQKLADFFHQAVVEPQGMAILSQISGSQNGKAEYVHPEGWKVWENVSALQQTMPLMSEKNE</sequence>
<evidence type="ECO:0000250" key="1"/>
<evidence type="ECO:0000255" key="2">
    <source>
        <dbReference type="PROSITE-ProRule" id="PRU10096"/>
    </source>
</evidence>
<evidence type="ECO:0000305" key="3"/>
<organism>
    <name type="scientific">Escherichia coli O6:H1 (strain CFT073 / ATCC 700928 / UPEC)</name>
    <dbReference type="NCBI Taxonomy" id="199310"/>
    <lineage>
        <taxon>Bacteria</taxon>
        <taxon>Pseudomonadati</taxon>
        <taxon>Pseudomonadota</taxon>
        <taxon>Gammaproteobacteria</taxon>
        <taxon>Enterobacterales</taxon>
        <taxon>Enterobacteriaceae</taxon>
        <taxon>Escherichia</taxon>
    </lineage>
</organism>
<reference key="1">
    <citation type="journal article" date="2002" name="Proc. Natl. Acad. Sci. U.S.A.">
        <title>Extensive mosaic structure revealed by the complete genome sequence of uropathogenic Escherichia coli.</title>
        <authorList>
            <person name="Welch R.A."/>
            <person name="Burland V."/>
            <person name="Plunkett G. III"/>
            <person name="Redford P."/>
            <person name="Roesch P."/>
            <person name="Rasko D."/>
            <person name="Buckles E.L."/>
            <person name="Liou S.-R."/>
            <person name="Boutin A."/>
            <person name="Hackett J."/>
            <person name="Stroud D."/>
            <person name="Mayhew G.F."/>
            <person name="Rose D.J."/>
            <person name="Zhou S."/>
            <person name="Schwartz D.C."/>
            <person name="Perna N.T."/>
            <person name="Mobley H.L.T."/>
            <person name="Donnenberg M.S."/>
            <person name="Blattner F.R."/>
        </authorList>
    </citation>
    <scope>NUCLEOTIDE SEQUENCE [LARGE SCALE GENOMIC DNA]</scope>
    <source>
        <strain>CFT073 / ATCC 700928 / UPEC</strain>
    </source>
</reference>
<name>PTRA_ECOL6</name>
<proteinExistence type="inferred from homology"/>
<accession>Q8CVS2</accession>
<comment type="function">
    <text evidence="1">Endopeptidase that degrades small peptides of less than 7 kDa, such as glucagon and insulin.</text>
</comment>
<comment type="catalytic activity">
    <reaction evidence="2">
        <text>Preferential cleavage of 16-Tyr-|-Leu-17 and 25-Phe-|-Tyr-26 bonds of oxidized insulin B chain. Also acts on other substrates of Mw less than 7 kDa such as insulin and glucagon.</text>
        <dbReference type="EC" id="3.4.24.55"/>
    </reaction>
</comment>
<comment type="cofactor">
    <cofactor evidence="1">
        <name>Zn(2+)</name>
        <dbReference type="ChEBI" id="CHEBI:29105"/>
    </cofactor>
    <text evidence="1">Binds 1 zinc ion per subunit.</text>
</comment>
<comment type="subunit">
    <text evidence="1">Monomer.</text>
</comment>
<comment type="subcellular location">
    <subcellularLocation>
        <location evidence="1">Periplasm</location>
    </subcellularLocation>
</comment>
<comment type="similarity">
    <text evidence="3">Belongs to the peptidase M16 family.</text>
</comment>
<keyword id="KW-0378">Hydrolase</keyword>
<keyword id="KW-0460">Magnesium</keyword>
<keyword id="KW-0479">Metal-binding</keyword>
<keyword id="KW-0482">Metalloprotease</keyword>
<keyword id="KW-0574">Periplasm</keyword>
<keyword id="KW-0645">Protease</keyword>
<keyword id="KW-1185">Reference proteome</keyword>
<keyword id="KW-0732">Signal</keyword>
<keyword id="KW-0862">Zinc</keyword>
<dbReference type="EC" id="3.4.24.55"/>
<dbReference type="EMBL" id="AE014075">
    <property type="protein sequence ID" value="AAN81860.1"/>
    <property type="molecule type" value="Genomic_DNA"/>
</dbReference>
<dbReference type="RefSeq" id="WP_001138109.1">
    <property type="nucleotide sequence ID" value="NZ_CP051263.1"/>
</dbReference>
<dbReference type="SMR" id="Q8CVS2"/>
<dbReference type="STRING" id="199310.c3415"/>
<dbReference type="MEROPS" id="M16.001"/>
<dbReference type="KEGG" id="ecc:c3415"/>
<dbReference type="eggNOG" id="COG1025">
    <property type="taxonomic scope" value="Bacteria"/>
</dbReference>
<dbReference type="HOGENOM" id="CLU_004639_1_3_6"/>
<dbReference type="BioCyc" id="ECOL199310:C3415-MONOMER"/>
<dbReference type="Proteomes" id="UP000001410">
    <property type="component" value="Chromosome"/>
</dbReference>
<dbReference type="GO" id="GO:0005737">
    <property type="term" value="C:cytoplasm"/>
    <property type="evidence" value="ECO:0007669"/>
    <property type="project" value="UniProtKB-ARBA"/>
</dbReference>
<dbReference type="GO" id="GO:0042597">
    <property type="term" value="C:periplasmic space"/>
    <property type="evidence" value="ECO:0007669"/>
    <property type="project" value="UniProtKB-SubCell"/>
</dbReference>
<dbReference type="GO" id="GO:0046872">
    <property type="term" value="F:metal ion binding"/>
    <property type="evidence" value="ECO:0007669"/>
    <property type="project" value="UniProtKB-KW"/>
</dbReference>
<dbReference type="GO" id="GO:0004222">
    <property type="term" value="F:metalloendopeptidase activity"/>
    <property type="evidence" value="ECO:0007669"/>
    <property type="project" value="UniProtKB-EC"/>
</dbReference>
<dbReference type="GO" id="GO:0006508">
    <property type="term" value="P:proteolysis"/>
    <property type="evidence" value="ECO:0007669"/>
    <property type="project" value="UniProtKB-KW"/>
</dbReference>
<dbReference type="FunFam" id="3.30.830.10:FF:000012">
    <property type="entry name" value="Protease 3"/>
    <property type="match status" value="1"/>
</dbReference>
<dbReference type="Gene3D" id="3.30.830.10">
    <property type="entry name" value="Metalloenzyme, LuxS/M16 peptidase-like"/>
    <property type="match status" value="4"/>
</dbReference>
<dbReference type="InterPro" id="IPR011249">
    <property type="entry name" value="Metalloenz_LuxS/M16"/>
</dbReference>
<dbReference type="InterPro" id="IPR011765">
    <property type="entry name" value="Pept_M16_N"/>
</dbReference>
<dbReference type="InterPro" id="IPR001431">
    <property type="entry name" value="Pept_M16_Zn_BS"/>
</dbReference>
<dbReference type="InterPro" id="IPR050626">
    <property type="entry name" value="Peptidase_M16"/>
</dbReference>
<dbReference type="InterPro" id="IPR007863">
    <property type="entry name" value="Peptidase_M16_C"/>
</dbReference>
<dbReference type="InterPro" id="IPR032632">
    <property type="entry name" value="Peptidase_M16_M"/>
</dbReference>
<dbReference type="InterPro" id="IPR054734">
    <property type="entry name" value="PqqF-like_C_4"/>
</dbReference>
<dbReference type="NCBIfam" id="NF011681">
    <property type="entry name" value="PRK15101.1"/>
    <property type="match status" value="1"/>
</dbReference>
<dbReference type="PANTHER" id="PTHR43690:SF18">
    <property type="entry name" value="INSULIN-DEGRADING ENZYME-RELATED"/>
    <property type="match status" value="1"/>
</dbReference>
<dbReference type="PANTHER" id="PTHR43690">
    <property type="entry name" value="NARDILYSIN"/>
    <property type="match status" value="1"/>
</dbReference>
<dbReference type="Pfam" id="PF00675">
    <property type="entry name" value="Peptidase_M16"/>
    <property type="match status" value="1"/>
</dbReference>
<dbReference type="Pfam" id="PF05193">
    <property type="entry name" value="Peptidase_M16_C"/>
    <property type="match status" value="1"/>
</dbReference>
<dbReference type="Pfam" id="PF16187">
    <property type="entry name" value="Peptidase_M16_M"/>
    <property type="match status" value="1"/>
</dbReference>
<dbReference type="Pfam" id="PF22456">
    <property type="entry name" value="PqqF-like_C_4"/>
    <property type="match status" value="1"/>
</dbReference>
<dbReference type="SUPFAM" id="SSF63411">
    <property type="entry name" value="LuxS/MPP-like metallohydrolase"/>
    <property type="match status" value="4"/>
</dbReference>
<dbReference type="PROSITE" id="PS00143">
    <property type="entry name" value="INSULINASE"/>
    <property type="match status" value="1"/>
</dbReference>
<feature type="signal peptide" evidence="1">
    <location>
        <begin position="1"/>
        <end position="23"/>
    </location>
</feature>
<feature type="chain" id="PRO_0000026760" description="Protease 3">
    <location>
        <begin position="24"/>
        <end position="962"/>
    </location>
</feature>
<feature type="active site" description="Proton acceptor" evidence="2">
    <location>
        <position position="91"/>
    </location>
</feature>
<feature type="binding site" evidence="2">
    <location>
        <position position="88"/>
    </location>
    <ligand>
        <name>Zn(2+)</name>
        <dbReference type="ChEBI" id="CHEBI:29105"/>
    </ligand>
</feature>
<feature type="binding site" evidence="2">
    <location>
        <position position="92"/>
    </location>
    <ligand>
        <name>Zn(2+)</name>
        <dbReference type="ChEBI" id="CHEBI:29105"/>
    </ligand>
</feature>
<feature type="binding site" evidence="2">
    <location>
        <position position="169"/>
    </location>
    <ligand>
        <name>Zn(2+)</name>
        <dbReference type="ChEBI" id="CHEBI:29105"/>
    </ligand>
</feature>